<reference key="1">
    <citation type="journal article" date="2004" name="Genome Res.">
        <title>The complete genome and proteome of Mycoplasma mobile.</title>
        <authorList>
            <person name="Jaffe J.D."/>
            <person name="Stange-Thomann N."/>
            <person name="Smith C."/>
            <person name="DeCaprio D."/>
            <person name="Fisher S."/>
            <person name="Butler J."/>
            <person name="Calvo S."/>
            <person name="Elkins T."/>
            <person name="FitzGerald M.G."/>
            <person name="Hafez N."/>
            <person name="Kodira C.D."/>
            <person name="Major J."/>
            <person name="Wang S."/>
            <person name="Wilkinson J."/>
            <person name="Nicol R."/>
            <person name="Nusbaum C."/>
            <person name="Birren B."/>
            <person name="Berg H.C."/>
            <person name="Church G.M."/>
        </authorList>
    </citation>
    <scope>NUCLEOTIDE SEQUENCE [LARGE SCALE GENOMIC DNA]</scope>
    <source>
        <strain>ATCC 43663 / NCTC 11711 / 163 K</strain>
    </source>
</reference>
<proteinExistence type="inferred from homology"/>
<feature type="chain" id="PRO_0000119604" description="Glutamate--tRNA ligase">
    <location>
        <begin position="1"/>
        <end position="464"/>
    </location>
</feature>
<feature type="short sequence motif" description="'HIGH' region" evidence="1">
    <location>
        <begin position="12"/>
        <end position="22"/>
    </location>
</feature>
<feature type="short sequence motif" description="'KMSKS' region" evidence="1">
    <location>
        <begin position="254"/>
        <end position="258"/>
    </location>
</feature>
<feature type="binding site" evidence="1">
    <location>
        <position position="257"/>
    </location>
    <ligand>
        <name>ATP</name>
        <dbReference type="ChEBI" id="CHEBI:30616"/>
    </ligand>
</feature>
<gene>
    <name evidence="1" type="primary">gltX</name>
    <name type="ordered locus">MMOB0050</name>
</gene>
<accession>Q6KIT3</accession>
<comment type="function">
    <text evidence="1">Catalyzes the attachment of glutamate to tRNA(Glu) in a two-step reaction: glutamate is first activated by ATP to form Glu-AMP and then transferred to the acceptor end of tRNA(Glu).</text>
</comment>
<comment type="catalytic activity">
    <reaction evidence="1">
        <text>tRNA(Glu) + L-glutamate + ATP = L-glutamyl-tRNA(Glu) + AMP + diphosphate</text>
        <dbReference type="Rhea" id="RHEA:23540"/>
        <dbReference type="Rhea" id="RHEA-COMP:9663"/>
        <dbReference type="Rhea" id="RHEA-COMP:9680"/>
        <dbReference type="ChEBI" id="CHEBI:29985"/>
        <dbReference type="ChEBI" id="CHEBI:30616"/>
        <dbReference type="ChEBI" id="CHEBI:33019"/>
        <dbReference type="ChEBI" id="CHEBI:78442"/>
        <dbReference type="ChEBI" id="CHEBI:78520"/>
        <dbReference type="ChEBI" id="CHEBI:456215"/>
        <dbReference type="EC" id="6.1.1.17"/>
    </reaction>
</comment>
<comment type="subunit">
    <text evidence="1">Monomer.</text>
</comment>
<comment type="subcellular location">
    <subcellularLocation>
        <location evidence="1">Cytoplasm</location>
    </subcellularLocation>
</comment>
<comment type="similarity">
    <text evidence="1">Belongs to the class-I aminoacyl-tRNA synthetase family. Glutamate--tRNA ligase type 1 subfamily.</text>
</comment>
<dbReference type="EC" id="6.1.1.17" evidence="1"/>
<dbReference type="EMBL" id="AE017308">
    <property type="protein sequence ID" value="AAT27491.1"/>
    <property type="molecule type" value="Genomic_DNA"/>
</dbReference>
<dbReference type="RefSeq" id="WP_011264525.1">
    <property type="nucleotide sequence ID" value="NC_006908.1"/>
</dbReference>
<dbReference type="SMR" id="Q6KIT3"/>
<dbReference type="STRING" id="267748.MMOB0050"/>
<dbReference type="KEGG" id="mmo:MMOB0050"/>
<dbReference type="eggNOG" id="COG0008">
    <property type="taxonomic scope" value="Bacteria"/>
</dbReference>
<dbReference type="HOGENOM" id="CLU_015768_6_1_14"/>
<dbReference type="OrthoDB" id="9807503at2"/>
<dbReference type="Proteomes" id="UP000009072">
    <property type="component" value="Chromosome"/>
</dbReference>
<dbReference type="GO" id="GO:0005829">
    <property type="term" value="C:cytosol"/>
    <property type="evidence" value="ECO:0007669"/>
    <property type="project" value="TreeGrafter"/>
</dbReference>
<dbReference type="GO" id="GO:0005524">
    <property type="term" value="F:ATP binding"/>
    <property type="evidence" value="ECO:0007669"/>
    <property type="project" value="UniProtKB-UniRule"/>
</dbReference>
<dbReference type="GO" id="GO:0004818">
    <property type="term" value="F:glutamate-tRNA ligase activity"/>
    <property type="evidence" value="ECO:0007669"/>
    <property type="project" value="UniProtKB-UniRule"/>
</dbReference>
<dbReference type="GO" id="GO:0000049">
    <property type="term" value="F:tRNA binding"/>
    <property type="evidence" value="ECO:0007669"/>
    <property type="project" value="InterPro"/>
</dbReference>
<dbReference type="GO" id="GO:0008270">
    <property type="term" value="F:zinc ion binding"/>
    <property type="evidence" value="ECO:0007669"/>
    <property type="project" value="InterPro"/>
</dbReference>
<dbReference type="GO" id="GO:0006424">
    <property type="term" value="P:glutamyl-tRNA aminoacylation"/>
    <property type="evidence" value="ECO:0007669"/>
    <property type="project" value="UniProtKB-UniRule"/>
</dbReference>
<dbReference type="CDD" id="cd00808">
    <property type="entry name" value="GluRS_core"/>
    <property type="match status" value="1"/>
</dbReference>
<dbReference type="FunFam" id="3.40.50.620:FF:000007">
    <property type="entry name" value="Glutamate--tRNA ligase"/>
    <property type="match status" value="1"/>
</dbReference>
<dbReference type="Gene3D" id="1.10.10.350">
    <property type="match status" value="1"/>
</dbReference>
<dbReference type="Gene3D" id="3.40.50.620">
    <property type="entry name" value="HUPs"/>
    <property type="match status" value="1"/>
</dbReference>
<dbReference type="HAMAP" id="MF_00022">
    <property type="entry name" value="Glu_tRNA_synth_type1"/>
    <property type="match status" value="1"/>
</dbReference>
<dbReference type="InterPro" id="IPR045462">
    <property type="entry name" value="aa-tRNA-synth_I_cd-bd"/>
</dbReference>
<dbReference type="InterPro" id="IPR020751">
    <property type="entry name" value="aa-tRNA-synth_I_codon-bd_sub2"/>
</dbReference>
<dbReference type="InterPro" id="IPR001412">
    <property type="entry name" value="aa-tRNA-synth_I_CS"/>
</dbReference>
<dbReference type="InterPro" id="IPR008925">
    <property type="entry name" value="aa_tRNA-synth_I_cd-bd_sf"/>
</dbReference>
<dbReference type="InterPro" id="IPR004527">
    <property type="entry name" value="Glu-tRNA-ligase_bac/mito"/>
</dbReference>
<dbReference type="InterPro" id="IPR000924">
    <property type="entry name" value="Glu/Gln-tRNA-synth"/>
</dbReference>
<dbReference type="InterPro" id="IPR020058">
    <property type="entry name" value="Glu/Gln-tRNA-synth_Ib_cat-dom"/>
</dbReference>
<dbReference type="InterPro" id="IPR049940">
    <property type="entry name" value="GluQ/Sye"/>
</dbReference>
<dbReference type="InterPro" id="IPR033910">
    <property type="entry name" value="GluRS_core"/>
</dbReference>
<dbReference type="InterPro" id="IPR014729">
    <property type="entry name" value="Rossmann-like_a/b/a_fold"/>
</dbReference>
<dbReference type="NCBIfam" id="TIGR00464">
    <property type="entry name" value="gltX_bact"/>
    <property type="match status" value="1"/>
</dbReference>
<dbReference type="PANTHER" id="PTHR43311">
    <property type="entry name" value="GLUTAMATE--TRNA LIGASE"/>
    <property type="match status" value="1"/>
</dbReference>
<dbReference type="PANTHER" id="PTHR43311:SF2">
    <property type="entry name" value="GLUTAMATE--TRNA LIGASE, MITOCHONDRIAL-RELATED"/>
    <property type="match status" value="1"/>
</dbReference>
<dbReference type="Pfam" id="PF19269">
    <property type="entry name" value="Anticodon_2"/>
    <property type="match status" value="1"/>
</dbReference>
<dbReference type="Pfam" id="PF00749">
    <property type="entry name" value="tRNA-synt_1c"/>
    <property type="match status" value="1"/>
</dbReference>
<dbReference type="PRINTS" id="PR00987">
    <property type="entry name" value="TRNASYNTHGLU"/>
</dbReference>
<dbReference type="SUPFAM" id="SSF48163">
    <property type="entry name" value="An anticodon-binding domain of class I aminoacyl-tRNA synthetases"/>
    <property type="match status" value="1"/>
</dbReference>
<dbReference type="SUPFAM" id="SSF52374">
    <property type="entry name" value="Nucleotidylyl transferase"/>
    <property type="match status" value="1"/>
</dbReference>
<dbReference type="PROSITE" id="PS00178">
    <property type="entry name" value="AA_TRNA_LIGASE_I"/>
    <property type="match status" value="1"/>
</dbReference>
<evidence type="ECO:0000255" key="1">
    <source>
        <dbReference type="HAMAP-Rule" id="MF_00022"/>
    </source>
</evidence>
<organism>
    <name type="scientific">Mycoplasma mobile (strain ATCC 43663 / 163K / NCTC 11711)</name>
    <name type="common">Mesomycoplasma mobile</name>
    <dbReference type="NCBI Taxonomy" id="267748"/>
    <lineage>
        <taxon>Bacteria</taxon>
        <taxon>Bacillati</taxon>
        <taxon>Mycoplasmatota</taxon>
        <taxon>Mycoplasmoidales</taxon>
        <taxon>Metamycoplasmataceae</taxon>
        <taxon>Mesomycoplasma</taxon>
    </lineage>
</organism>
<name>SYE_MYCM1</name>
<sequence>MKKTRIRTRYAPSPTGYLHIGGARTALFNYLFAKHFNGDFIVRIEDTDIARNVAGGEESQLDNLEWLQIYPDESPKNPNEKYGKYRQSEKLDRYNEIVEILLKKGLAYKAYDTTYELEKQRAEQIAKGIFSFRYDRNWLKISDEEIKKREVEQTYSIRIALPKNHDYEWNDLVRGLIKVNSEDIGDWVIIKSDKYPTYNFAVVVDDFDMQISHVLRGEEHITNTPKQLAVYEAMGWDKPVFGHLTLITNSKGVKLSKRDDSVKQFISNYKEDGYVSWAISNYLALLGWTSKDTKEIMTKEELIEKFDPERLSASPSKFDMKKMNWYGKHYLQEINKNEIFEYLESLKDKKWLDLFIETFLPNAFSLSELKRELKEYENPMIEKPEIEINDVVKKFKQNLNFENFSVDSIQKAIDKTGTDLNVNGKKLFLPIRLATTFNEHGPELAKAIYLYGKEIIQKRLGNVN</sequence>
<protein>
    <recommendedName>
        <fullName evidence="1">Glutamate--tRNA ligase</fullName>
        <ecNumber evidence="1">6.1.1.17</ecNumber>
    </recommendedName>
    <alternativeName>
        <fullName evidence="1">Glutamyl-tRNA synthetase</fullName>
        <shortName evidence="1">GluRS</shortName>
    </alternativeName>
</protein>
<keyword id="KW-0030">Aminoacyl-tRNA synthetase</keyword>
<keyword id="KW-0067">ATP-binding</keyword>
<keyword id="KW-0963">Cytoplasm</keyword>
<keyword id="KW-0436">Ligase</keyword>
<keyword id="KW-0547">Nucleotide-binding</keyword>
<keyword id="KW-0648">Protein biosynthesis</keyword>
<keyword id="KW-1185">Reference proteome</keyword>